<sequence>MGKQRLNAAIIGPGNIGTDLMYKILRRSEYLELKLVAGIVAESEGLRLAREEGVATSAAGIQAILDRKDIDIVFDATTAHAHAQHAPLLKDAGIIAVDLTPAAVGPYVMPVVNLEEHIDAMNVNLITCGGQATIPIVYAISRVVPTAYAEIVATIASKSAGPGTRQNIDEFTLTTAKGIVDIGNAQKGKAIILLNPADPPMMMNNTIYALIDQVDPAIEQKITESVEEIIKEVQAFVPGYKLKIPPMFDGNKVTVMIEVEGSGDYLPQYSGNLDLETCAALAVAEKMAKHKLAAGAN</sequence>
<comment type="catalytic activity">
    <reaction evidence="1">
        <text>acetaldehyde + NAD(+) + CoA = acetyl-CoA + NADH + H(+)</text>
        <dbReference type="Rhea" id="RHEA:23288"/>
        <dbReference type="ChEBI" id="CHEBI:15343"/>
        <dbReference type="ChEBI" id="CHEBI:15378"/>
        <dbReference type="ChEBI" id="CHEBI:57287"/>
        <dbReference type="ChEBI" id="CHEBI:57288"/>
        <dbReference type="ChEBI" id="CHEBI:57540"/>
        <dbReference type="ChEBI" id="CHEBI:57945"/>
        <dbReference type="EC" id="1.2.1.10"/>
    </reaction>
</comment>
<comment type="similarity">
    <text evidence="1">Belongs to the acetaldehyde dehydrogenase family.</text>
</comment>
<name>ACDH_DESHD</name>
<proteinExistence type="inferred from homology"/>
<evidence type="ECO:0000255" key="1">
    <source>
        <dbReference type="HAMAP-Rule" id="MF_01657"/>
    </source>
</evidence>
<protein>
    <recommendedName>
        <fullName evidence="1">Acetaldehyde dehydrogenase</fullName>
        <ecNumber evidence="1">1.2.1.10</ecNumber>
    </recommendedName>
    <alternativeName>
        <fullName evidence="1">Acetaldehyde dehydrogenase [acetylating]</fullName>
    </alternativeName>
</protein>
<accession>B8G186</accession>
<gene>
    <name type="ordered locus">Dhaf_1244</name>
</gene>
<reference key="1">
    <citation type="journal article" date="2012" name="BMC Microbiol.">
        <title>Genome sequence of Desulfitobacterium hafniense DCB-2, a Gram-positive anaerobe capable of dehalogenation and metal reduction.</title>
        <authorList>
            <person name="Kim S.H."/>
            <person name="Harzman C."/>
            <person name="Davis J.K."/>
            <person name="Hutcheson R."/>
            <person name="Broderick J.B."/>
            <person name="Marsh T.L."/>
            <person name="Tiedje J.M."/>
        </authorList>
    </citation>
    <scope>NUCLEOTIDE SEQUENCE [LARGE SCALE GENOMIC DNA]</scope>
    <source>
        <strain>DSM 10664 / DCB-2</strain>
    </source>
</reference>
<organism>
    <name type="scientific">Desulfitobacterium hafniense (strain DSM 10664 / DCB-2)</name>
    <dbReference type="NCBI Taxonomy" id="272564"/>
    <lineage>
        <taxon>Bacteria</taxon>
        <taxon>Bacillati</taxon>
        <taxon>Bacillota</taxon>
        <taxon>Clostridia</taxon>
        <taxon>Eubacteriales</taxon>
        <taxon>Desulfitobacteriaceae</taxon>
        <taxon>Desulfitobacterium</taxon>
    </lineage>
</organism>
<keyword id="KW-0058">Aromatic hydrocarbons catabolism</keyword>
<keyword id="KW-0520">NAD</keyword>
<keyword id="KW-0560">Oxidoreductase</keyword>
<feature type="chain" id="PRO_0000387658" description="Acetaldehyde dehydrogenase">
    <location>
        <begin position="1"/>
        <end position="297"/>
    </location>
</feature>
<feature type="active site" description="Acyl-thioester intermediate" evidence="1">
    <location>
        <position position="128"/>
    </location>
</feature>
<feature type="binding site" evidence="1">
    <location>
        <begin position="159"/>
        <end position="167"/>
    </location>
    <ligand>
        <name>NAD(+)</name>
        <dbReference type="ChEBI" id="CHEBI:57540"/>
    </ligand>
</feature>
<feature type="binding site" evidence="1">
    <location>
        <position position="272"/>
    </location>
    <ligand>
        <name>NAD(+)</name>
        <dbReference type="ChEBI" id="CHEBI:57540"/>
    </ligand>
</feature>
<dbReference type="EC" id="1.2.1.10" evidence="1"/>
<dbReference type="EMBL" id="CP001336">
    <property type="protein sequence ID" value="ACL19301.1"/>
    <property type="molecule type" value="Genomic_DNA"/>
</dbReference>
<dbReference type="RefSeq" id="WP_015943315.1">
    <property type="nucleotide sequence ID" value="NC_011830.1"/>
</dbReference>
<dbReference type="SMR" id="B8G186"/>
<dbReference type="KEGG" id="dhd:Dhaf_1244"/>
<dbReference type="HOGENOM" id="CLU_062208_0_0_9"/>
<dbReference type="Proteomes" id="UP000007726">
    <property type="component" value="Chromosome"/>
</dbReference>
<dbReference type="GO" id="GO:0008774">
    <property type="term" value="F:acetaldehyde dehydrogenase (acetylating) activity"/>
    <property type="evidence" value="ECO:0007669"/>
    <property type="project" value="UniProtKB-UniRule"/>
</dbReference>
<dbReference type="GO" id="GO:0051287">
    <property type="term" value="F:NAD binding"/>
    <property type="evidence" value="ECO:0007669"/>
    <property type="project" value="UniProtKB-UniRule"/>
</dbReference>
<dbReference type="GO" id="GO:0009056">
    <property type="term" value="P:catabolic process"/>
    <property type="evidence" value="ECO:0007669"/>
    <property type="project" value="UniProtKB-KW"/>
</dbReference>
<dbReference type="CDD" id="cd23933">
    <property type="entry name" value="ALDH_C"/>
    <property type="match status" value="1"/>
</dbReference>
<dbReference type="Gene3D" id="3.30.360.10">
    <property type="entry name" value="Dihydrodipicolinate Reductase, domain 2"/>
    <property type="match status" value="1"/>
</dbReference>
<dbReference type="Gene3D" id="3.40.50.720">
    <property type="entry name" value="NAD(P)-binding Rossmann-like Domain"/>
    <property type="match status" value="1"/>
</dbReference>
<dbReference type="HAMAP" id="MF_01657">
    <property type="entry name" value="Ac_ald_DH_ac"/>
    <property type="match status" value="1"/>
</dbReference>
<dbReference type="InterPro" id="IPR003361">
    <property type="entry name" value="Acetaldehyde_dehydrogenase"/>
</dbReference>
<dbReference type="InterPro" id="IPR015426">
    <property type="entry name" value="Acetylaldehyde_DH_C"/>
</dbReference>
<dbReference type="InterPro" id="IPR036291">
    <property type="entry name" value="NAD(P)-bd_dom_sf"/>
</dbReference>
<dbReference type="InterPro" id="IPR000534">
    <property type="entry name" value="Semialdehyde_DH_NAD-bd"/>
</dbReference>
<dbReference type="NCBIfam" id="TIGR03215">
    <property type="entry name" value="ac_ald_DH_ac"/>
    <property type="match status" value="1"/>
</dbReference>
<dbReference type="NCBIfam" id="NF006157">
    <property type="entry name" value="PRK08300.1"/>
    <property type="match status" value="1"/>
</dbReference>
<dbReference type="Pfam" id="PF09290">
    <property type="entry name" value="AcetDehyd-dimer"/>
    <property type="match status" value="1"/>
</dbReference>
<dbReference type="Pfam" id="PF01118">
    <property type="entry name" value="Semialdhyde_dh"/>
    <property type="match status" value="1"/>
</dbReference>
<dbReference type="PIRSF" id="PIRSF015689">
    <property type="entry name" value="Actaldh_dh_actl"/>
    <property type="match status" value="1"/>
</dbReference>
<dbReference type="SMART" id="SM00859">
    <property type="entry name" value="Semialdhyde_dh"/>
    <property type="match status" value="1"/>
</dbReference>
<dbReference type="SUPFAM" id="SSF55347">
    <property type="entry name" value="Glyceraldehyde-3-phosphate dehydrogenase-like, C-terminal domain"/>
    <property type="match status" value="1"/>
</dbReference>
<dbReference type="SUPFAM" id="SSF51735">
    <property type="entry name" value="NAD(P)-binding Rossmann-fold domains"/>
    <property type="match status" value="1"/>
</dbReference>